<evidence type="ECO:0000255" key="1">
    <source>
        <dbReference type="HAMAP-Rule" id="MF_00144"/>
    </source>
</evidence>
<proteinExistence type="inferred from homology"/>
<feature type="chain" id="PRO_1000009599" description="tRNA-specific 2-thiouridylase MnmA">
    <location>
        <begin position="1"/>
        <end position="378"/>
    </location>
</feature>
<feature type="region of interest" description="Interaction with target base in tRNA" evidence="1">
    <location>
        <begin position="94"/>
        <end position="96"/>
    </location>
</feature>
<feature type="region of interest" description="Interaction with tRNA" evidence="1">
    <location>
        <begin position="145"/>
        <end position="147"/>
    </location>
</feature>
<feature type="region of interest" description="Interaction with tRNA" evidence="1">
    <location>
        <begin position="307"/>
        <end position="308"/>
    </location>
</feature>
<feature type="active site" description="Nucleophile" evidence="1">
    <location>
        <position position="99"/>
    </location>
</feature>
<feature type="active site" description="Cysteine persulfide intermediate" evidence="1">
    <location>
        <position position="195"/>
    </location>
</feature>
<feature type="binding site" evidence="1">
    <location>
        <begin position="9"/>
        <end position="16"/>
    </location>
    <ligand>
        <name>ATP</name>
        <dbReference type="ChEBI" id="CHEBI:30616"/>
    </ligand>
</feature>
<feature type="binding site" evidence="1">
    <location>
        <position position="35"/>
    </location>
    <ligand>
        <name>ATP</name>
        <dbReference type="ChEBI" id="CHEBI:30616"/>
    </ligand>
</feature>
<feature type="binding site" evidence="1">
    <location>
        <position position="123"/>
    </location>
    <ligand>
        <name>ATP</name>
        <dbReference type="ChEBI" id="CHEBI:30616"/>
    </ligand>
</feature>
<feature type="site" description="Interaction with tRNA" evidence="1">
    <location>
        <position position="124"/>
    </location>
</feature>
<feature type="site" description="Interaction with tRNA" evidence="1">
    <location>
        <position position="340"/>
    </location>
</feature>
<feature type="disulfide bond" description="Alternate" evidence="1">
    <location>
        <begin position="99"/>
        <end position="195"/>
    </location>
</feature>
<accession>Q2P2Q7</accession>
<dbReference type="EC" id="2.8.1.13" evidence="1"/>
<dbReference type="EMBL" id="AP008229">
    <property type="protein sequence ID" value="BAE69170.1"/>
    <property type="molecule type" value="Genomic_DNA"/>
</dbReference>
<dbReference type="RefSeq" id="WP_011408666.1">
    <property type="nucleotide sequence ID" value="NC_007705.1"/>
</dbReference>
<dbReference type="SMR" id="Q2P2Q7"/>
<dbReference type="KEGG" id="xom:XOO2415"/>
<dbReference type="HOGENOM" id="CLU_035188_1_0_6"/>
<dbReference type="GO" id="GO:0005737">
    <property type="term" value="C:cytoplasm"/>
    <property type="evidence" value="ECO:0007669"/>
    <property type="project" value="UniProtKB-SubCell"/>
</dbReference>
<dbReference type="GO" id="GO:0005524">
    <property type="term" value="F:ATP binding"/>
    <property type="evidence" value="ECO:0007669"/>
    <property type="project" value="UniProtKB-KW"/>
</dbReference>
<dbReference type="GO" id="GO:0000049">
    <property type="term" value="F:tRNA binding"/>
    <property type="evidence" value="ECO:0007669"/>
    <property type="project" value="UniProtKB-KW"/>
</dbReference>
<dbReference type="GO" id="GO:0103016">
    <property type="term" value="F:tRNA-uridine 2-sulfurtransferase activity"/>
    <property type="evidence" value="ECO:0007669"/>
    <property type="project" value="UniProtKB-EC"/>
</dbReference>
<dbReference type="GO" id="GO:0002143">
    <property type="term" value="P:tRNA wobble position uridine thiolation"/>
    <property type="evidence" value="ECO:0007669"/>
    <property type="project" value="TreeGrafter"/>
</dbReference>
<dbReference type="CDD" id="cd01998">
    <property type="entry name" value="MnmA_TRMU-like"/>
    <property type="match status" value="1"/>
</dbReference>
<dbReference type="FunFam" id="2.30.30.280:FF:000001">
    <property type="entry name" value="tRNA-specific 2-thiouridylase MnmA"/>
    <property type="match status" value="1"/>
</dbReference>
<dbReference type="FunFam" id="2.40.30.10:FF:000023">
    <property type="entry name" value="tRNA-specific 2-thiouridylase MnmA"/>
    <property type="match status" value="1"/>
</dbReference>
<dbReference type="FunFam" id="3.40.50.620:FF:000004">
    <property type="entry name" value="tRNA-specific 2-thiouridylase MnmA"/>
    <property type="match status" value="1"/>
</dbReference>
<dbReference type="Gene3D" id="2.30.30.280">
    <property type="entry name" value="Adenine nucleotide alpha hydrolases-like domains"/>
    <property type="match status" value="1"/>
</dbReference>
<dbReference type="Gene3D" id="3.40.50.620">
    <property type="entry name" value="HUPs"/>
    <property type="match status" value="1"/>
</dbReference>
<dbReference type="Gene3D" id="2.40.30.10">
    <property type="entry name" value="Translation factors"/>
    <property type="match status" value="1"/>
</dbReference>
<dbReference type="HAMAP" id="MF_00144">
    <property type="entry name" value="tRNA_thiouridyl_MnmA"/>
    <property type="match status" value="1"/>
</dbReference>
<dbReference type="InterPro" id="IPR004506">
    <property type="entry name" value="MnmA-like"/>
</dbReference>
<dbReference type="InterPro" id="IPR046885">
    <property type="entry name" value="MnmA-like_C"/>
</dbReference>
<dbReference type="InterPro" id="IPR046884">
    <property type="entry name" value="MnmA-like_central"/>
</dbReference>
<dbReference type="InterPro" id="IPR023382">
    <property type="entry name" value="MnmA-like_central_sf"/>
</dbReference>
<dbReference type="InterPro" id="IPR014729">
    <property type="entry name" value="Rossmann-like_a/b/a_fold"/>
</dbReference>
<dbReference type="NCBIfam" id="NF001138">
    <property type="entry name" value="PRK00143.1"/>
    <property type="match status" value="1"/>
</dbReference>
<dbReference type="NCBIfam" id="TIGR00420">
    <property type="entry name" value="trmU"/>
    <property type="match status" value="1"/>
</dbReference>
<dbReference type="PANTHER" id="PTHR11933:SF5">
    <property type="entry name" value="MITOCHONDRIAL TRNA-SPECIFIC 2-THIOURIDYLASE 1"/>
    <property type="match status" value="1"/>
</dbReference>
<dbReference type="PANTHER" id="PTHR11933">
    <property type="entry name" value="TRNA 5-METHYLAMINOMETHYL-2-THIOURIDYLATE -METHYLTRANSFERASE"/>
    <property type="match status" value="1"/>
</dbReference>
<dbReference type="Pfam" id="PF03054">
    <property type="entry name" value="tRNA_Me_trans"/>
    <property type="match status" value="1"/>
</dbReference>
<dbReference type="Pfam" id="PF20258">
    <property type="entry name" value="tRNA_Me_trans_C"/>
    <property type="match status" value="1"/>
</dbReference>
<dbReference type="Pfam" id="PF20259">
    <property type="entry name" value="tRNA_Me_trans_M"/>
    <property type="match status" value="1"/>
</dbReference>
<dbReference type="SUPFAM" id="SSF52402">
    <property type="entry name" value="Adenine nucleotide alpha hydrolases-like"/>
    <property type="match status" value="1"/>
</dbReference>
<protein>
    <recommendedName>
        <fullName evidence="1">tRNA-specific 2-thiouridylase MnmA</fullName>
        <ecNumber evidence="1">2.8.1.13</ecNumber>
    </recommendedName>
</protein>
<reference key="1">
    <citation type="journal article" date="2005" name="Jpn. Agric. Res. Q.">
        <title>Genome sequence of Xanthomonas oryzae pv. oryzae suggests contribution of large numbers of effector genes and insertion sequences to its race diversity.</title>
        <authorList>
            <person name="Ochiai H."/>
            <person name="Inoue Y."/>
            <person name="Takeya M."/>
            <person name="Sasaki A."/>
            <person name="Kaku H."/>
        </authorList>
    </citation>
    <scope>NUCLEOTIDE SEQUENCE [LARGE SCALE GENOMIC DNA]</scope>
    <source>
        <strain>MAFF 311018</strain>
    </source>
</reference>
<sequence length="378" mass="41645">MSTPHIVVGVSGGVDSSVAAWKLAQQGEPIAGLFMQNWADDGSGDCRAEDDRRDAVAVCGVLGMPFHFRDFSGEYWSGVFEHFLAEYAAGRTPNPDVLCNREVKFKHFLDAAQALGAERIATGHYAQVAHRGRRWRLLRGADRDKDQSYFLHQLGQSQLAATLFPIGDLEKSTLRRIARDAGLPTHAKKDSTGICFIGERDFREFLGRYLPARTGEIRDPQGQRIAEHPGVFYFTLGQREGLNIGGVRGRAAAPWYVVGKDVASNVLYVDQDRDSPLLQSRWLQSEQAHWVTGAPPARRFSCTAQTRYRQPDEPCTVDVQDDGSVQVHFERPQRAVTPGQSLVLYDGKECLGGAVIAATDAPLERQLAGSSFSSEVVA</sequence>
<keyword id="KW-0067">ATP-binding</keyword>
<keyword id="KW-0963">Cytoplasm</keyword>
<keyword id="KW-1015">Disulfide bond</keyword>
<keyword id="KW-0547">Nucleotide-binding</keyword>
<keyword id="KW-0694">RNA-binding</keyword>
<keyword id="KW-0808">Transferase</keyword>
<keyword id="KW-0819">tRNA processing</keyword>
<keyword id="KW-0820">tRNA-binding</keyword>
<organism>
    <name type="scientific">Xanthomonas oryzae pv. oryzae (strain MAFF 311018)</name>
    <dbReference type="NCBI Taxonomy" id="342109"/>
    <lineage>
        <taxon>Bacteria</taxon>
        <taxon>Pseudomonadati</taxon>
        <taxon>Pseudomonadota</taxon>
        <taxon>Gammaproteobacteria</taxon>
        <taxon>Lysobacterales</taxon>
        <taxon>Lysobacteraceae</taxon>
        <taxon>Xanthomonas</taxon>
    </lineage>
</organism>
<comment type="function">
    <text evidence="1">Catalyzes the 2-thiolation of uridine at the wobble position (U34) of tRNA, leading to the formation of s(2)U34.</text>
</comment>
<comment type="catalytic activity">
    <reaction evidence="1">
        <text>S-sulfanyl-L-cysteinyl-[protein] + uridine(34) in tRNA + AH2 + ATP = 2-thiouridine(34) in tRNA + L-cysteinyl-[protein] + A + AMP + diphosphate + H(+)</text>
        <dbReference type="Rhea" id="RHEA:47032"/>
        <dbReference type="Rhea" id="RHEA-COMP:10131"/>
        <dbReference type="Rhea" id="RHEA-COMP:11726"/>
        <dbReference type="Rhea" id="RHEA-COMP:11727"/>
        <dbReference type="Rhea" id="RHEA-COMP:11728"/>
        <dbReference type="ChEBI" id="CHEBI:13193"/>
        <dbReference type="ChEBI" id="CHEBI:15378"/>
        <dbReference type="ChEBI" id="CHEBI:17499"/>
        <dbReference type="ChEBI" id="CHEBI:29950"/>
        <dbReference type="ChEBI" id="CHEBI:30616"/>
        <dbReference type="ChEBI" id="CHEBI:33019"/>
        <dbReference type="ChEBI" id="CHEBI:61963"/>
        <dbReference type="ChEBI" id="CHEBI:65315"/>
        <dbReference type="ChEBI" id="CHEBI:87170"/>
        <dbReference type="ChEBI" id="CHEBI:456215"/>
        <dbReference type="EC" id="2.8.1.13"/>
    </reaction>
</comment>
<comment type="subcellular location">
    <subcellularLocation>
        <location evidence="1">Cytoplasm</location>
    </subcellularLocation>
</comment>
<comment type="similarity">
    <text evidence="1">Belongs to the MnmA/TRMU family.</text>
</comment>
<name>MNMA_XANOM</name>
<gene>
    <name evidence="1" type="primary">mnmA</name>
    <name type="synonym">trmU</name>
    <name type="ordered locus">XOO2415</name>
</gene>